<proteinExistence type="inferred from homology"/>
<feature type="chain" id="PRO_1000040635" description="3,4-dihydroxy-2-butanone 4-phosphate synthase">
    <location>
        <begin position="1"/>
        <end position="217"/>
    </location>
</feature>
<feature type="binding site" evidence="1">
    <location>
        <begin position="37"/>
        <end position="38"/>
    </location>
    <ligand>
        <name>D-ribulose 5-phosphate</name>
        <dbReference type="ChEBI" id="CHEBI:58121"/>
    </ligand>
</feature>
<feature type="binding site" evidence="1">
    <location>
        <position position="38"/>
    </location>
    <ligand>
        <name>Mg(2+)</name>
        <dbReference type="ChEBI" id="CHEBI:18420"/>
        <label>1</label>
    </ligand>
</feature>
<feature type="binding site" evidence="1">
    <location>
        <position position="38"/>
    </location>
    <ligand>
        <name>Mg(2+)</name>
        <dbReference type="ChEBI" id="CHEBI:18420"/>
        <label>2</label>
    </ligand>
</feature>
<feature type="binding site" evidence="1">
    <location>
        <position position="42"/>
    </location>
    <ligand>
        <name>D-ribulose 5-phosphate</name>
        <dbReference type="ChEBI" id="CHEBI:58121"/>
    </ligand>
</feature>
<feature type="binding site" evidence="1">
    <location>
        <begin position="150"/>
        <end position="154"/>
    </location>
    <ligand>
        <name>D-ribulose 5-phosphate</name>
        <dbReference type="ChEBI" id="CHEBI:58121"/>
    </ligand>
</feature>
<feature type="binding site" evidence="1">
    <location>
        <position position="153"/>
    </location>
    <ligand>
        <name>Mg(2+)</name>
        <dbReference type="ChEBI" id="CHEBI:18420"/>
        <label>2</label>
    </ligand>
</feature>
<feature type="binding site" evidence="1">
    <location>
        <position position="174"/>
    </location>
    <ligand>
        <name>D-ribulose 5-phosphate</name>
        <dbReference type="ChEBI" id="CHEBI:58121"/>
    </ligand>
</feature>
<feature type="site" description="Essential for catalytic activity" evidence="1">
    <location>
        <position position="136"/>
    </location>
</feature>
<feature type="site" description="Essential for catalytic activity" evidence="1">
    <location>
        <position position="174"/>
    </location>
</feature>
<gene>
    <name evidence="1" type="primary">ribB</name>
    <name type="ordered locus">SDY_3226</name>
</gene>
<dbReference type="EC" id="4.1.99.12" evidence="1"/>
<dbReference type="EMBL" id="CP000034">
    <property type="protein sequence ID" value="ABB63234.1"/>
    <property type="molecule type" value="Genomic_DNA"/>
</dbReference>
<dbReference type="RefSeq" id="WP_001076997.1">
    <property type="nucleotide sequence ID" value="NC_007606.1"/>
</dbReference>
<dbReference type="RefSeq" id="YP_404725.1">
    <property type="nucleotide sequence ID" value="NC_007606.1"/>
</dbReference>
<dbReference type="SMR" id="Q32BS1"/>
<dbReference type="STRING" id="300267.SDY_3226"/>
<dbReference type="EnsemblBacteria" id="ABB63234">
    <property type="protein sequence ID" value="ABB63234"/>
    <property type="gene ID" value="SDY_3226"/>
</dbReference>
<dbReference type="GeneID" id="93778953"/>
<dbReference type="KEGG" id="sdy:SDY_3226"/>
<dbReference type="PATRIC" id="fig|300267.13.peg.3852"/>
<dbReference type="HOGENOM" id="CLU_020273_3_0_6"/>
<dbReference type="UniPathway" id="UPA00275">
    <property type="reaction ID" value="UER00399"/>
</dbReference>
<dbReference type="Proteomes" id="UP000002716">
    <property type="component" value="Chromosome"/>
</dbReference>
<dbReference type="GO" id="GO:0005829">
    <property type="term" value="C:cytosol"/>
    <property type="evidence" value="ECO:0007669"/>
    <property type="project" value="TreeGrafter"/>
</dbReference>
<dbReference type="GO" id="GO:0008686">
    <property type="term" value="F:3,4-dihydroxy-2-butanone-4-phosphate synthase activity"/>
    <property type="evidence" value="ECO:0007669"/>
    <property type="project" value="UniProtKB-UniRule"/>
</dbReference>
<dbReference type="GO" id="GO:0000287">
    <property type="term" value="F:magnesium ion binding"/>
    <property type="evidence" value="ECO:0007669"/>
    <property type="project" value="UniProtKB-UniRule"/>
</dbReference>
<dbReference type="GO" id="GO:0030145">
    <property type="term" value="F:manganese ion binding"/>
    <property type="evidence" value="ECO:0007669"/>
    <property type="project" value="UniProtKB-UniRule"/>
</dbReference>
<dbReference type="GO" id="GO:0009231">
    <property type="term" value="P:riboflavin biosynthetic process"/>
    <property type="evidence" value="ECO:0007669"/>
    <property type="project" value="UniProtKB-UniRule"/>
</dbReference>
<dbReference type="FunFam" id="3.90.870.10:FF:000002">
    <property type="entry name" value="3,4-dihydroxy-2-butanone 4-phosphate synthase"/>
    <property type="match status" value="1"/>
</dbReference>
<dbReference type="Gene3D" id="3.90.870.10">
    <property type="entry name" value="DHBP synthase"/>
    <property type="match status" value="1"/>
</dbReference>
<dbReference type="HAMAP" id="MF_00180">
    <property type="entry name" value="RibB"/>
    <property type="match status" value="1"/>
</dbReference>
<dbReference type="InterPro" id="IPR017945">
    <property type="entry name" value="DHBP_synth_RibB-like_a/b_dom"/>
</dbReference>
<dbReference type="InterPro" id="IPR000422">
    <property type="entry name" value="DHBP_synthase_RibB"/>
</dbReference>
<dbReference type="NCBIfam" id="TIGR00506">
    <property type="entry name" value="ribB"/>
    <property type="match status" value="1"/>
</dbReference>
<dbReference type="PANTHER" id="PTHR21327:SF38">
    <property type="entry name" value="3,4-DIHYDROXY-2-BUTANONE 4-PHOSPHATE SYNTHASE"/>
    <property type="match status" value="1"/>
</dbReference>
<dbReference type="PANTHER" id="PTHR21327">
    <property type="entry name" value="GTP CYCLOHYDROLASE II-RELATED"/>
    <property type="match status" value="1"/>
</dbReference>
<dbReference type="Pfam" id="PF00926">
    <property type="entry name" value="DHBP_synthase"/>
    <property type="match status" value="1"/>
</dbReference>
<dbReference type="SUPFAM" id="SSF55821">
    <property type="entry name" value="YrdC/RibB"/>
    <property type="match status" value="1"/>
</dbReference>
<protein>
    <recommendedName>
        <fullName evidence="1">3,4-dihydroxy-2-butanone 4-phosphate synthase</fullName>
        <shortName evidence="1">DHBP synthase</shortName>
        <ecNumber evidence="1">4.1.99.12</ecNumber>
    </recommendedName>
</protein>
<keyword id="KW-0456">Lyase</keyword>
<keyword id="KW-0460">Magnesium</keyword>
<keyword id="KW-0464">Manganese</keyword>
<keyword id="KW-0479">Metal-binding</keyword>
<keyword id="KW-1185">Reference proteome</keyword>
<keyword id="KW-0686">Riboflavin biosynthesis</keyword>
<reference key="1">
    <citation type="journal article" date="2005" name="Nucleic Acids Res.">
        <title>Genome dynamics and diversity of Shigella species, the etiologic agents of bacillary dysentery.</title>
        <authorList>
            <person name="Yang F."/>
            <person name="Yang J."/>
            <person name="Zhang X."/>
            <person name="Chen L."/>
            <person name="Jiang Y."/>
            <person name="Yan Y."/>
            <person name="Tang X."/>
            <person name="Wang J."/>
            <person name="Xiong Z."/>
            <person name="Dong J."/>
            <person name="Xue Y."/>
            <person name="Zhu Y."/>
            <person name="Xu X."/>
            <person name="Sun L."/>
            <person name="Chen S."/>
            <person name="Nie H."/>
            <person name="Peng J."/>
            <person name="Xu J."/>
            <person name="Wang Y."/>
            <person name="Yuan Z."/>
            <person name="Wen Y."/>
            <person name="Yao Z."/>
            <person name="Shen Y."/>
            <person name="Qiang B."/>
            <person name="Hou Y."/>
            <person name="Yu J."/>
            <person name="Jin Q."/>
        </authorList>
    </citation>
    <scope>NUCLEOTIDE SEQUENCE [LARGE SCALE GENOMIC DNA]</scope>
    <source>
        <strain>Sd197</strain>
    </source>
</reference>
<evidence type="ECO:0000255" key="1">
    <source>
        <dbReference type="HAMAP-Rule" id="MF_00180"/>
    </source>
</evidence>
<organism>
    <name type="scientific">Shigella dysenteriae serotype 1 (strain Sd197)</name>
    <dbReference type="NCBI Taxonomy" id="300267"/>
    <lineage>
        <taxon>Bacteria</taxon>
        <taxon>Pseudomonadati</taxon>
        <taxon>Pseudomonadota</taxon>
        <taxon>Gammaproteobacteria</taxon>
        <taxon>Enterobacterales</taxon>
        <taxon>Enterobacteriaceae</taxon>
        <taxon>Shigella</taxon>
    </lineage>
</organism>
<comment type="function">
    <text evidence="1">Catalyzes the conversion of D-ribulose 5-phosphate to formate and 3,4-dihydroxy-2-butanone 4-phosphate.</text>
</comment>
<comment type="catalytic activity">
    <reaction evidence="1">
        <text>D-ribulose 5-phosphate = (2S)-2-hydroxy-3-oxobutyl phosphate + formate + H(+)</text>
        <dbReference type="Rhea" id="RHEA:18457"/>
        <dbReference type="ChEBI" id="CHEBI:15378"/>
        <dbReference type="ChEBI" id="CHEBI:15740"/>
        <dbReference type="ChEBI" id="CHEBI:58121"/>
        <dbReference type="ChEBI" id="CHEBI:58830"/>
        <dbReference type="EC" id="4.1.99.12"/>
    </reaction>
</comment>
<comment type="cofactor">
    <cofactor evidence="1">
        <name>Mg(2+)</name>
        <dbReference type="ChEBI" id="CHEBI:18420"/>
    </cofactor>
    <cofactor evidence="1">
        <name>Mn(2+)</name>
        <dbReference type="ChEBI" id="CHEBI:29035"/>
    </cofactor>
    <text evidence="1">Binds 2 divalent metal cations per subunit. Magnesium or manganese.</text>
</comment>
<comment type="pathway">
    <text evidence="1">Cofactor biosynthesis; riboflavin biosynthesis; 2-hydroxy-3-oxobutyl phosphate from D-ribulose 5-phosphate: step 1/1.</text>
</comment>
<comment type="subunit">
    <text evidence="1">Homodimer.</text>
</comment>
<comment type="similarity">
    <text evidence="1">Belongs to the DHBP synthase family.</text>
</comment>
<name>RIBB_SHIDS</name>
<sequence>MNQTLLSSFGTPFERVENALAALREGRGVMVLDDEDRENEGDMIFPAETMTVEQMALTIRHGSGIVCLCITEDRRKQLDLPMMVENNTSAYGTGFTVTIEAAEGVTTGVSAADRITTVRAAIADGAKPSDLNRPGHVFPLRAQAGGVLTRGGHTEATIDLMTLAGFKPAGVLCELTNDDGTMARAPECIEFANKHNMALVTIEDLVAYRQAHERKAS</sequence>
<accession>Q32BS1</accession>